<gene>
    <name evidence="1" type="primary">glgB</name>
    <name type="ordered locus">HSM_1368</name>
</gene>
<accession>B0UU89</accession>
<feature type="chain" id="PRO_1000083068" description="1,4-alpha-glucan branching enzyme GlgB">
    <location>
        <begin position="1"/>
        <end position="815"/>
    </location>
</feature>
<feature type="active site" description="Nucleophile" evidence="1">
    <location>
        <position position="405"/>
    </location>
</feature>
<feature type="active site" description="Proton donor" evidence="1">
    <location>
        <position position="458"/>
    </location>
</feature>
<organism>
    <name type="scientific">Histophilus somni (strain 2336)</name>
    <name type="common">Haemophilus somnus</name>
    <dbReference type="NCBI Taxonomy" id="228400"/>
    <lineage>
        <taxon>Bacteria</taxon>
        <taxon>Pseudomonadati</taxon>
        <taxon>Pseudomonadota</taxon>
        <taxon>Gammaproteobacteria</taxon>
        <taxon>Pasteurellales</taxon>
        <taxon>Pasteurellaceae</taxon>
        <taxon>Histophilus</taxon>
    </lineage>
</organism>
<reference key="1">
    <citation type="submission" date="2008-02" db="EMBL/GenBank/DDBJ databases">
        <title>Complete sequence of Haemophilus somnus 2336.</title>
        <authorList>
            <consortium name="US DOE Joint Genome Institute"/>
            <person name="Siddaramappa S."/>
            <person name="Duncan A.J."/>
            <person name="Challacombe J.F."/>
            <person name="Rainey D."/>
            <person name="Gillaspy A.F."/>
            <person name="Carson M."/>
            <person name="Gipson J."/>
            <person name="Gipson M."/>
            <person name="Bruce D."/>
            <person name="Detter J.C."/>
            <person name="Han C.S."/>
            <person name="Land M."/>
            <person name="Tapia R."/>
            <person name="Thompson L.S."/>
            <person name="Orvis J."/>
            <person name="Zaitshik J."/>
            <person name="Barnes G."/>
            <person name="Brettin T.S."/>
            <person name="Dyer D.W."/>
            <person name="Inzana T.J."/>
        </authorList>
    </citation>
    <scope>NUCLEOTIDE SEQUENCE [LARGE SCALE GENOMIC DNA]</scope>
    <source>
        <strain>2336</strain>
    </source>
</reference>
<proteinExistence type="inferred from homology"/>
<protein>
    <recommendedName>
        <fullName evidence="1">1,4-alpha-glucan branching enzyme GlgB</fullName>
        <ecNumber evidence="1">2.4.1.18</ecNumber>
    </recommendedName>
    <alternativeName>
        <fullName evidence="1">1,4-alpha-D-glucan:1,4-alpha-D-glucan 6-glucosyl-transferase</fullName>
    </alternativeName>
    <alternativeName>
        <fullName evidence="1">Alpha-(1-&gt;4)-glucan branching enzyme</fullName>
    </alternativeName>
    <alternativeName>
        <fullName evidence="1">Glycogen branching enzyme</fullName>
        <shortName evidence="1">BE</shortName>
    </alternativeName>
</protein>
<keyword id="KW-0119">Carbohydrate metabolism</keyword>
<keyword id="KW-0320">Glycogen biosynthesis</keyword>
<keyword id="KW-0321">Glycogen metabolism</keyword>
<keyword id="KW-0328">Glycosyltransferase</keyword>
<keyword id="KW-0808">Transferase</keyword>
<dbReference type="EC" id="2.4.1.18" evidence="1"/>
<dbReference type="EMBL" id="CP000947">
    <property type="protein sequence ID" value="ACA31105.1"/>
    <property type="molecule type" value="Genomic_DNA"/>
</dbReference>
<dbReference type="RefSeq" id="WP_012340519.1">
    <property type="nucleotide sequence ID" value="NC_010519.1"/>
</dbReference>
<dbReference type="SMR" id="B0UU89"/>
<dbReference type="STRING" id="228400.HSM_1368"/>
<dbReference type="CAZy" id="CBM48">
    <property type="family name" value="Carbohydrate-Binding Module Family 48"/>
</dbReference>
<dbReference type="CAZy" id="GH13">
    <property type="family name" value="Glycoside Hydrolase Family 13"/>
</dbReference>
<dbReference type="GeneID" id="31487666"/>
<dbReference type="KEGG" id="hsm:HSM_1368"/>
<dbReference type="HOGENOM" id="CLU_004245_3_2_6"/>
<dbReference type="UniPathway" id="UPA00164"/>
<dbReference type="GO" id="GO:0005829">
    <property type="term" value="C:cytosol"/>
    <property type="evidence" value="ECO:0007669"/>
    <property type="project" value="TreeGrafter"/>
</dbReference>
<dbReference type="GO" id="GO:0003844">
    <property type="term" value="F:1,4-alpha-glucan branching enzyme activity"/>
    <property type="evidence" value="ECO:0007669"/>
    <property type="project" value="UniProtKB-UniRule"/>
</dbReference>
<dbReference type="GO" id="GO:0043169">
    <property type="term" value="F:cation binding"/>
    <property type="evidence" value="ECO:0007669"/>
    <property type="project" value="InterPro"/>
</dbReference>
<dbReference type="GO" id="GO:0004553">
    <property type="term" value="F:hydrolase activity, hydrolyzing O-glycosyl compounds"/>
    <property type="evidence" value="ECO:0007669"/>
    <property type="project" value="InterPro"/>
</dbReference>
<dbReference type="GO" id="GO:0005978">
    <property type="term" value="P:glycogen biosynthetic process"/>
    <property type="evidence" value="ECO:0007669"/>
    <property type="project" value="UniProtKB-UniRule"/>
</dbReference>
<dbReference type="CDD" id="cd11322">
    <property type="entry name" value="AmyAc_Glg_BE"/>
    <property type="match status" value="1"/>
</dbReference>
<dbReference type="CDD" id="cd02855">
    <property type="entry name" value="E_set_GBE_prok_N"/>
    <property type="match status" value="1"/>
</dbReference>
<dbReference type="FunFam" id="2.60.40.10:FF:000169">
    <property type="entry name" value="1,4-alpha-glucan branching enzyme GlgB"/>
    <property type="match status" value="1"/>
</dbReference>
<dbReference type="FunFam" id="2.60.40.1180:FF:000002">
    <property type="entry name" value="1,4-alpha-glucan branching enzyme GlgB"/>
    <property type="match status" value="1"/>
</dbReference>
<dbReference type="FunFam" id="3.20.20.80:FF:000003">
    <property type="entry name" value="1,4-alpha-glucan branching enzyme GlgB"/>
    <property type="match status" value="1"/>
</dbReference>
<dbReference type="Gene3D" id="3.20.20.80">
    <property type="entry name" value="Glycosidases"/>
    <property type="match status" value="1"/>
</dbReference>
<dbReference type="Gene3D" id="2.60.40.1180">
    <property type="entry name" value="Golgi alpha-mannosidase II"/>
    <property type="match status" value="1"/>
</dbReference>
<dbReference type="Gene3D" id="2.60.40.10">
    <property type="entry name" value="Immunoglobulins"/>
    <property type="match status" value="2"/>
</dbReference>
<dbReference type="HAMAP" id="MF_00685">
    <property type="entry name" value="GlgB"/>
    <property type="match status" value="1"/>
</dbReference>
<dbReference type="InterPro" id="IPR006048">
    <property type="entry name" value="A-amylase/branching_C"/>
</dbReference>
<dbReference type="InterPro" id="IPR037439">
    <property type="entry name" value="Branching_enzy"/>
</dbReference>
<dbReference type="InterPro" id="IPR006407">
    <property type="entry name" value="GlgB"/>
</dbReference>
<dbReference type="InterPro" id="IPR054169">
    <property type="entry name" value="GlgB_N"/>
</dbReference>
<dbReference type="InterPro" id="IPR044143">
    <property type="entry name" value="GlgB_N_E_set_prok"/>
</dbReference>
<dbReference type="InterPro" id="IPR006047">
    <property type="entry name" value="Glyco_hydro_13_cat_dom"/>
</dbReference>
<dbReference type="InterPro" id="IPR004193">
    <property type="entry name" value="Glyco_hydro_13_N"/>
</dbReference>
<dbReference type="InterPro" id="IPR013780">
    <property type="entry name" value="Glyco_hydro_b"/>
</dbReference>
<dbReference type="InterPro" id="IPR017853">
    <property type="entry name" value="Glycoside_hydrolase_SF"/>
</dbReference>
<dbReference type="InterPro" id="IPR013783">
    <property type="entry name" value="Ig-like_fold"/>
</dbReference>
<dbReference type="InterPro" id="IPR014756">
    <property type="entry name" value="Ig_E-set"/>
</dbReference>
<dbReference type="NCBIfam" id="TIGR01515">
    <property type="entry name" value="branching_enzym"/>
    <property type="match status" value="1"/>
</dbReference>
<dbReference type="NCBIfam" id="NF003811">
    <property type="entry name" value="PRK05402.1"/>
    <property type="match status" value="1"/>
</dbReference>
<dbReference type="NCBIfam" id="NF008967">
    <property type="entry name" value="PRK12313.1"/>
    <property type="match status" value="1"/>
</dbReference>
<dbReference type="PANTHER" id="PTHR43651">
    <property type="entry name" value="1,4-ALPHA-GLUCAN-BRANCHING ENZYME"/>
    <property type="match status" value="1"/>
</dbReference>
<dbReference type="PANTHER" id="PTHR43651:SF3">
    <property type="entry name" value="1,4-ALPHA-GLUCAN-BRANCHING ENZYME"/>
    <property type="match status" value="1"/>
</dbReference>
<dbReference type="Pfam" id="PF00128">
    <property type="entry name" value="Alpha-amylase"/>
    <property type="match status" value="1"/>
</dbReference>
<dbReference type="Pfam" id="PF02806">
    <property type="entry name" value="Alpha-amylase_C"/>
    <property type="match status" value="1"/>
</dbReference>
<dbReference type="Pfam" id="PF02922">
    <property type="entry name" value="CBM_48"/>
    <property type="match status" value="1"/>
</dbReference>
<dbReference type="Pfam" id="PF22019">
    <property type="entry name" value="GlgB_N"/>
    <property type="match status" value="1"/>
</dbReference>
<dbReference type="PIRSF" id="PIRSF000463">
    <property type="entry name" value="GlgB"/>
    <property type="match status" value="1"/>
</dbReference>
<dbReference type="SMART" id="SM00642">
    <property type="entry name" value="Aamy"/>
    <property type="match status" value="1"/>
</dbReference>
<dbReference type="SUPFAM" id="SSF51445">
    <property type="entry name" value="(Trans)glycosidases"/>
    <property type="match status" value="1"/>
</dbReference>
<dbReference type="SUPFAM" id="SSF81296">
    <property type="entry name" value="E set domains"/>
    <property type="match status" value="2"/>
</dbReference>
<dbReference type="SUPFAM" id="SSF51011">
    <property type="entry name" value="Glycosyl hydrolase domain"/>
    <property type="match status" value="1"/>
</dbReference>
<evidence type="ECO:0000255" key="1">
    <source>
        <dbReference type="HAMAP-Rule" id="MF_00685"/>
    </source>
</evidence>
<comment type="function">
    <text evidence="1">Catalyzes the formation of the alpha-1,6-glucosidic linkages in glycogen by scission of a 1,4-alpha-linked oligosaccharide from growing alpha-1,4-glucan chains and the subsequent attachment of the oligosaccharide to the alpha-1,6 position.</text>
</comment>
<comment type="catalytic activity">
    <reaction evidence="1">
        <text>Transfers a segment of a (1-&gt;4)-alpha-D-glucan chain to a primary hydroxy group in a similar glucan chain.</text>
        <dbReference type="EC" id="2.4.1.18"/>
    </reaction>
</comment>
<comment type="pathway">
    <text evidence="1">Glycan biosynthesis; glycogen biosynthesis.</text>
</comment>
<comment type="subunit">
    <text evidence="1">Monomer.</text>
</comment>
<comment type="similarity">
    <text evidence="1">Belongs to the glycosyl hydrolase 13 family. GlgB subfamily.</text>
</comment>
<name>GLGB_HISS2</name>
<sequence length="815" mass="93617">MNKFVSQSTIDTFFDGEHADPFSVLGMHETSNGIEVRVLLPDAEKVFVLSKETKNVLCELLRVDERGFFAGVVPNTHSFFAYQLEVYWGNEAQVIEDPYAFHPMINELDNWLLAEGSHKRPYEILGAHFTECDNVAGVNFRLWAPNAKRVSVVGDFNYWDGRRHPMRFHQSSGIWELFLPKVSLGQLYKFELLDCHNQLRLKADPYAFSSQLRPDTASQIGALPEIVSMTEKRRKANQADQPISIYEVHLGSWRRNLENNFWLDYDQIAEELIPYVKDMGFTHIELLPLSEFPFDGSWGYQPIGLYSPTSRFGTAEGFKRLVNKAHKAGINVILDWVPGHFPSDTHGLVAFDGTALYEHADPKEGYHQDWNTLIYNYGRHEVKNYLASNALYWMERFGLDGIRVDAVASMIYRDYSREDGQWIPNQYGGRENLEAIEFLKQTNHLLGTEIPGVVSIAEESTSFAGVTHPPYEGGLGFHFKWNMGWMNDTLSYMKKDPIYRQHHHSQMTFGMVYQYSENFILPLSHDEVVHGKCSLLGKMPGDAWQKFANLRAYYGYMWGYPGKKLLFMGNEFAQGREWNYQESLDWYLLDEFHGGGWHKAIQDYVRDLNHIYQKNAPLFELDTDPQGFEWLVVDDYQNSVFVFERRSKKDERIIVVSNFTPVLRQNYRFGVNIAGEYLEILNSDAQQYMGSNSTNTSKIVTEDIESHNKAQSISIDIPPLATVYLKLHKVKKVRKMRKTSKVEDTAVKTEKKIAKGKTTRTKKTVADTVSEATEVKPKKTVTKRAVVKKVKNEESAVFPNAEVIAESTSVENNVS</sequence>